<evidence type="ECO:0000255" key="1">
    <source>
        <dbReference type="HAMAP-Rule" id="MF_00657"/>
    </source>
</evidence>
<accession>Q128T0</accession>
<feature type="chain" id="PRO_1000061726" description="PKHD-type hydroxylase Bpro_3048">
    <location>
        <begin position="1"/>
        <end position="227"/>
    </location>
</feature>
<feature type="domain" description="Fe2OG dioxygenase" evidence="1">
    <location>
        <begin position="78"/>
        <end position="179"/>
    </location>
</feature>
<feature type="binding site" evidence="1">
    <location>
        <position position="97"/>
    </location>
    <ligand>
        <name>Fe cation</name>
        <dbReference type="ChEBI" id="CHEBI:24875"/>
    </ligand>
</feature>
<feature type="binding site" evidence="1">
    <location>
        <position position="99"/>
    </location>
    <ligand>
        <name>Fe cation</name>
        <dbReference type="ChEBI" id="CHEBI:24875"/>
    </ligand>
</feature>
<feature type="binding site" evidence="1">
    <location>
        <position position="160"/>
    </location>
    <ligand>
        <name>Fe cation</name>
        <dbReference type="ChEBI" id="CHEBI:24875"/>
    </ligand>
</feature>
<feature type="binding site" evidence="1">
    <location>
        <position position="170"/>
    </location>
    <ligand>
        <name>2-oxoglutarate</name>
        <dbReference type="ChEBI" id="CHEBI:16810"/>
    </ligand>
</feature>
<proteinExistence type="inferred from homology"/>
<comment type="cofactor">
    <cofactor evidence="1">
        <name>Fe(2+)</name>
        <dbReference type="ChEBI" id="CHEBI:29033"/>
    </cofactor>
    <text evidence="1">Binds 1 Fe(2+) ion per subunit.</text>
</comment>
<comment type="cofactor">
    <cofactor evidence="1">
        <name>L-ascorbate</name>
        <dbReference type="ChEBI" id="CHEBI:38290"/>
    </cofactor>
</comment>
<dbReference type="EC" id="1.14.11.-" evidence="1"/>
<dbReference type="EMBL" id="CP000316">
    <property type="protein sequence ID" value="ABE44962.1"/>
    <property type="molecule type" value="Genomic_DNA"/>
</dbReference>
<dbReference type="RefSeq" id="WP_011483959.1">
    <property type="nucleotide sequence ID" value="NC_007948.1"/>
</dbReference>
<dbReference type="SMR" id="Q128T0"/>
<dbReference type="STRING" id="296591.Bpro_3048"/>
<dbReference type="KEGG" id="pol:Bpro_3048"/>
<dbReference type="eggNOG" id="COG3128">
    <property type="taxonomic scope" value="Bacteria"/>
</dbReference>
<dbReference type="HOGENOM" id="CLU_106663_0_0_4"/>
<dbReference type="OrthoDB" id="9812472at2"/>
<dbReference type="Proteomes" id="UP000001983">
    <property type="component" value="Chromosome"/>
</dbReference>
<dbReference type="GO" id="GO:0016706">
    <property type="term" value="F:2-oxoglutarate-dependent dioxygenase activity"/>
    <property type="evidence" value="ECO:0007669"/>
    <property type="project" value="UniProtKB-UniRule"/>
</dbReference>
<dbReference type="GO" id="GO:0005506">
    <property type="term" value="F:iron ion binding"/>
    <property type="evidence" value="ECO:0007669"/>
    <property type="project" value="UniProtKB-UniRule"/>
</dbReference>
<dbReference type="GO" id="GO:0031418">
    <property type="term" value="F:L-ascorbic acid binding"/>
    <property type="evidence" value="ECO:0007669"/>
    <property type="project" value="UniProtKB-KW"/>
</dbReference>
<dbReference type="GO" id="GO:0006974">
    <property type="term" value="P:DNA damage response"/>
    <property type="evidence" value="ECO:0007669"/>
    <property type="project" value="TreeGrafter"/>
</dbReference>
<dbReference type="GO" id="GO:0006879">
    <property type="term" value="P:intracellular iron ion homeostasis"/>
    <property type="evidence" value="ECO:0007669"/>
    <property type="project" value="TreeGrafter"/>
</dbReference>
<dbReference type="Gene3D" id="2.60.120.620">
    <property type="entry name" value="q2cbj1_9rhob like domain"/>
    <property type="match status" value="1"/>
</dbReference>
<dbReference type="Gene3D" id="4.10.860.20">
    <property type="entry name" value="Rabenosyn, Rab binding domain"/>
    <property type="match status" value="1"/>
</dbReference>
<dbReference type="HAMAP" id="MF_00657">
    <property type="entry name" value="Hydroxyl_YbiX"/>
    <property type="match status" value="1"/>
</dbReference>
<dbReference type="InterPro" id="IPR005123">
    <property type="entry name" value="Oxoglu/Fe-dep_dioxygenase_dom"/>
</dbReference>
<dbReference type="InterPro" id="IPR041097">
    <property type="entry name" value="PKHD_C"/>
</dbReference>
<dbReference type="InterPro" id="IPR023550">
    <property type="entry name" value="PKHD_hydroxylase"/>
</dbReference>
<dbReference type="InterPro" id="IPR006620">
    <property type="entry name" value="Pro_4_hyd_alph"/>
</dbReference>
<dbReference type="InterPro" id="IPR044862">
    <property type="entry name" value="Pro_4_hyd_alph_FE2OG_OXY"/>
</dbReference>
<dbReference type="NCBIfam" id="NF003974">
    <property type="entry name" value="PRK05467.1-3"/>
    <property type="match status" value="1"/>
</dbReference>
<dbReference type="NCBIfam" id="NF003975">
    <property type="entry name" value="PRK05467.1-4"/>
    <property type="match status" value="1"/>
</dbReference>
<dbReference type="PANTHER" id="PTHR41536">
    <property type="entry name" value="PKHD-TYPE HYDROXYLASE YBIX"/>
    <property type="match status" value="1"/>
</dbReference>
<dbReference type="PANTHER" id="PTHR41536:SF1">
    <property type="entry name" value="PKHD-TYPE HYDROXYLASE YBIX"/>
    <property type="match status" value="1"/>
</dbReference>
<dbReference type="Pfam" id="PF13640">
    <property type="entry name" value="2OG-FeII_Oxy_3"/>
    <property type="match status" value="1"/>
</dbReference>
<dbReference type="Pfam" id="PF18331">
    <property type="entry name" value="PKHD_C"/>
    <property type="match status" value="1"/>
</dbReference>
<dbReference type="SMART" id="SM00702">
    <property type="entry name" value="P4Hc"/>
    <property type="match status" value="1"/>
</dbReference>
<dbReference type="PROSITE" id="PS51471">
    <property type="entry name" value="FE2OG_OXY"/>
    <property type="match status" value="1"/>
</dbReference>
<keyword id="KW-0223">Dioxygenase</keyword>
<keyword id="KW-0408">Iron</keyword>
<keyword id="KW-0479">Metal-binding</keyword>
<keyword id="KW-0560">Oxidoreductase</keyword>
<keyword id="KW-1185">Reference proteome</keyword>
<keyword id="KW-0847">Vitamin C</keyword>
<sequence>MLLTLPDILSPQDLQAARQLLIDAPWADGRDSAGAQARQVKNNAQLPHDCEAARAIGTMVVGGLERSALFLTAALPKKIFTPRINRYSGAANHYGNHVDSAIRTMAGSGQRVRTDVSCTVFLSEPDDYEGGELTIADTYGEQRIKLPAGHAVLYPGTSLHQVQPVTRGQRLACFFWVESLVRGNEQRRLLFDMDMALMQLRQEHGESQATVALTGAYHNLLRMWADT</sequence>
<name>Y3048_POLSJ</name>
<reference key="1">
    <citation type="journal article" date="2008" name="Appl. Environ. Microbiol.">
        <title>The genome of Polaromonas sp. strain JS666: insights into the evolution of a hydrocarbon- and xenobiotic-degrading bacterium, and features of relevance to biotechnology.</title>
        <authorList>
            <person name="Mattes T.E."/>
            <person name="Alexander A.K."/>
            <person name="Richardson P.M."/>
            <person name="Munk A.C."/>
            <person name="Han C.S."/>
            <person name="Stothard P."/>
            <person name="Coleman N.V."/>
        </authorList>
    </citation>
    <scope>NUCLEOTIDE SEQUENCE [LARGE SCALE GENOMIC DNA]</scope>
    <source>
        <strain>JS666 / ATCC BAA-500</strain>
    </source>
</reference>
<gene>
    <name type="ordered locus">Bpro_3048</name>
</gene>
<organism>
    <name type="scientific">Polaromonas sp. (strain JS666 / ATCC BAA-500)</name>
    <dbReference type="NCBI Taxonomy" id="296591"/>
    <lineage>
        <taxon>Bacteria</taxon>
        <taxon>Pseudomonadati</taxon>
        <taxon>Pseudomonadota</taxon>
        <taxon>Betaproteobacteria</taxon>
        <taxon>Burkholderiales</taxon>
        <taxon>Comamonadaceae</taxon>
        <taxon>Polaromonas</taxon>
    </lineage>
</organism>
<protein>
    <recommendedName>
        <fullName evidence="1">PKHD-type hydroxylase Bpro_3048</fullName>
        <ecNumber evidence="1">1.14.11.-</ecNumber>
    </recommendedName>
</protein>